<geneLocation type="mitochondrion"/>
<sequence length="100" mass="11253">MGSLLGLCLIVQIITGLFLAMHYVSDISSAFSSVAHICRDVNYGWLIRNFHANGASLFFICIYLHIARGLYYGSYLYMETWNIGVILLLLTMMTAFVGYV</sequence>
<name>CYB_POLSX</name>
<reference key="1">
    <citation type="journal article" date="1991" name="Mol. Biol. Evol.">
        <title>Phylogenetic relationships of neopterygian fishes, inferred from mitochondrial DNA sequences.</title>
        <authorList>
            <person name="Normark B.B."/>
            <person name="McCune A.R."/>
            <person name="Harrison R.G."/>
        </authorList>
    </citation>
    <scope>NUCLEOTIDE SEQUENCE [GENOMIC DNA]</scope>
</reference>
<dbReference type="EMBL" id="M64913">
    <property type="protein sequence ID" value="AAB01477.1"/>
    <property type="molecule type" value="Genomic_DNA"/>
</dbReference>
<dbReference type="SMR" id="P29669"/>
<dbReference type="GO" id="GO:0005743">
    <property type="term" value="C:mitochondrial inner membrane"/>
    <property type="evidence" value="ECO:0007669"/>
    <property type="project" value="UniProtKB-SubCell"/>
</dbReference>
<dbReference type="GO" id="GO:0046872">
    <property type="term" value="F:metal ion binding"/>
    <property type="evidence" value="ECO:0007669"/>
    <property type="project" value="UniProtKB-KW"/>
</dbReference>
<dbReference type="GO" id="GO:0008121">
    <property type="term" value="F:ubiquinol-cytochrome-c reductase activity"/>
    <property type="evidence" value="ECO:0007669"/>
    <property type="project" value="TreeGrafter"/>
</dbReference>
<dbReference type="GO" id="GO:0006122">
    <property type="term" value="P:mitochondrial electron transport, ubiquinol to cytochrome c"/>
    <property type="evidence" value="ECO:0007669"/>
    <property type="project" value="TreeGrafter"/>
</dbReference>
<dbReference type="Gene3D" id="1.20.810.10">
    <property type="entry name" value="Cytochrome Bc1 Complex, Chain C"/>
    <property type="match status" value="1"/>
</dbReference>
<dbReference type="InterPro" id="IPR005797">
    <property type="entry name" value="Cyt_b/b6_N"/>
</dbReference>
<dbReference type="InterPro" id="IPR027387">
    <property type="entry name" value="Cytb/b6-like_sf"/>
</dbReference>
<dbReference type="InterPro" id="IPR016174">
    <property type="entry name" value="Di-haem_cyt_TM"/>
</dbReference>
<dbReference type="PANTHER" id="PTHR19271">
    <property type="entry name" value="CYTOCHROME B"/>
    <property type="match status" value="1"/>
</dbReference>
<dbReference type="PANTHER" id="PTHR19271:SF16">
    <property type="entry name" value="CYTOCHROME B"/>
    <property type="match status" value="1"/>
</dbReference>
<dbReference type="Pfam" id="PF00033">
    <property type="entry name" value="Cytochrome_B"/>
    <property type="match status" value="1"/>
</dbReference>
<dbReference type="SUPFAM" id="SSF81342">
    <property type="entry name" value="Transmembrane di-heme cytochromes"/>
    <property type="match status" value="1"/>
</dbReference>
<dbReference type="PROSITE" id="PS51002">
    <property type="entry name" value="CYTB_NTER"/>
    <property type="match status" value="1"/>
</dbReference>
<organism>
    <name type="scientific">Polypterus sp.</name>
    <name type="common">Bichir</name>
    <dbReference type="NCBI Taxonomy" id="8291"/>
    <lineage>
        <taxon>Eukaryota</taxon>
        <taxon>Metazoa</taxon>
        <taxon>Chordata</taxon>
        <taxon>Craniata</taxon>
        <taxon>Vertebrata</taxon>
        <taxon>Euteleostomi</taxon>
        <taxon>Actinopterygii</taxon>
        <taxon>Polypteriformes</taxon>
        <taxon>Polypteridae</taxon>
        <taxon>Polypterus</taxon>
    </lineage>
</organism>
<keyword id="KW-0249">Electron transport</keyword>
<keyword id="KW-0349">Heme</keyword>
<keyword id="KW-0408">Iron</keyword>
<keyword id="KW-0472">Membrane</keyword>
<keyword id="KW-0479">Metal-binding</keyword>
<keyword id="KW-0496">Mitochondrion</keyword>
<keyword id="KW-0999">Mitochondrion inner membrane</keyword>
<keyword id="KW-0679">Respiratory chain</keyword>
<keyword id="KW-0812">Transmembrane</keyword>
<keyword id="KW-1133">Transmembrane helix</keyword>
<keyword id="KW-0813">Transport</keyword>
<keyword id="KW-0830">Ubiquinone</keyword>
<comment type="function">
    <text evidence="2">Component of the ubiquinol-cytochrome c reductase complex (complex III or cytochrome b-c1 complex) that is part of the mitochondrial respiratory chain. The b-c1 complex mediates electron transfer from ubiquinol to cytochrome c. Contributes to the generation of a proton gradient across the mitochondrial membrane that is then used for ATP synthesis.</text>
</comment>
<comment type="cofactor">
    <cofactor evidence="2">
        <name>heme b</name>
        <dbReference type="ChEBI" id="CHEBI:60344"/>
    </cofactor>
    <text evidence="2">Binds 2 heme b groups non-covalently.</text>
</comment>
<comment type="subunit">
    <text evidence="2">The cytochrome bc1 complex contains 3 respiratory subunits (MT-CYB, CYC1 and UQCRFS1), 2 core proteins (UQCRC1 and UQCRC2) and probably 6 low-molecular weight proteins.</text>
</comment>
<comment type="subcellular location">
    <subcellularLocation>
        <location evidence="2">Mitochondrion inner membrane</location>
        <topology evidence="2">Multi-pass membrane protein</topology>
    </subcellularLocation>
</comment>
<comment type="miscellaneous">
    <text evidence="1">Heme 1 (or BL or b562) is low-potential and absorbs at about 562 nm, and heme 2 (or BH or b566) is high-potential and absorbs at about 566 nm.</text>
</comment>
<comment type="similarity">
    <text evidence="3">Belongs to the cytochrome b family.</text>
</comment>
<comment type="caution">
    <text evidence="2">The full-length protein contains only eight transmembrane helices, not nine as predicted by bioinformatics tools.</text>
</comment>
<evidence type="ECO:0000250" key="1"/>
<evidence type="ECO:0000250" key="2">
    <source>
        <dbReference type="UniProtKB" id="P00157"/>
    </source>
</evidence>
<evidence type="ECO:0000255" key="3">
    <source>
        <dbReference type="PROSITE-ProRule" id="PRU00968"/>
    </source>
</evidence>
<proteinExistence type="inferred from homology"/>
<protein>
    <recommendedName>
        <fullName>Cytochrome b</fullName>
    </recommendedName>
    <alternativeName>
        <fullName>Complex III subunit 3</fullName>
    </alternativeName>
    <alternativeName>
        <fullName>Complex III subunit III</fullName>
    </alternativeName>
    <alternativeName>
        <fullName>Cytochrome b-c1 complex subunit 3</fullName>
    </alternativeName>
    <alternativeName>
        <fullName>Ubiquinol-cytochrome-c reductase complex cytochrome b subunit</fullName>
    </alternativeName>
</protein>
<gene>
    <name type="primary">mt-cyb</name>
    <name type="synonym">cob</name>
    <name type="synonym">cytb</name>
    <name type="synonym">mtcyb</name>
</gene>
<accession>P29669</accession>
<feature type="chain" id="PRO_0000061425" description="Cytochrome b">
    <location>
        <begin position="1" status="less than"/>
        <end position="100" status="greater than"/>
    </location>
</feature>
<feature type="transmembrane region" description="Helical" evidence="2">
    <location>
        <begin position="1"/>
        <end position="21"/>
    </location>
</feature>
<feature type="transmembrane region" description="Helical" evidence="2">
    <location>
        <begin position="45"/>
        <end position="66"/>
    </location>
</feature>
<feature type="transmembrane region" description="Helical" evidence="2">
    <location>
        <begin position="81"/>
        <end position="100" status="greater than"/>
    </location>
</feature>
<feature type="binding site" description="axial binding residue" evidence="2">
    <location>
        <position position="51"/>
    </location>
    <ligand>
        <name>heme b</name>
        <dbReference type="ChEBI" id="CHEBI:60344"/>
        <label>b562</label>
    </ligand>
    <ligandPart>
        <name>Fe</name>
        <dbReference type="ChEBI" id="CHEBI:18248"/>
    </ligandPart>
</feature>
<feature type="binding site" description="axial binding residue" evidence="2">
    <location>
        <position position="65"/>
    </location>
    <ligand>
        <name>heme b</name>
        <dbReference type="ChEBI" id="CHEBI:60344"/>
        <label>b566</label>
    </ligand>
    <ligandPart>
        <name>Fe</name>
        <dbReference type="ChEBI" id="CHEBI:18248"/>
    </ligandPart>
</feature>
<feature type="non-terminal residue">
    <location>
        <position position="1"/>
    </location>
</feature>
<feature type="non-terminal residue">
    <location>
        <position position="100"/>
    </location>
</feature>